<organismHost>
    <name type="scientific">Aedes</name>
    <dbReference type="NCBI Taxonomy" id="7158"/>
</organismHost>
<organismHost>
    <name type="scientific">Bos taurus</name>
    <name type="common">Bovine</name>
    <dbReference type="NCBI Taxonomy" id="9913"/>
</organismHost>
<organismHost>
    <name type="scientific">Culicoides</name>
    <dbReference type="NCBI Taxonomy" id="58271"/>
</organismHost>
<organismHost>
    <name type="scientific">Equus asinus</name>
    <name type="common">Donkey</name>
    <name type="synonym">Equus africanus asinus</name>
    <dbReference type="NCBI Taxonomy" id="9793"/>
</organismHost>
<organismHost>
    <name type="scientific">Equus caballus</name>
    <name type="common">Horse</name>
    <dbReference type="NCBI Taxonomy" id="9796"/>
</organismHost>
<organismHost>
    <name type="scientific">Homo sapiens</name>
    <name type="common">Human</name>
    <dbReference type="NCBI Taxonomy" id="9606"/>
</organismHost>
<organismHost>
    <name type="scientific">Lutzomyia</name>
    <dbReference type="NCBI Taxonomy" id="252607"/>
</organismHost>
<organismHost>
    <name type="scientific">Musca domestica</name>
    <name type="common">House fly</name>
    <dbReference type="NCBI Taxonomy" id="7370"/>
</organismHost>
<organismHost>
    <name type="scientific">Simuliidae</name>
    <name type="common">black flies</name>
    <dbReference type="NCBI Taxonomy" id="7190"/>
</organismHost>
<organismHost>
    <name type="scientific">Sus scrofa</name>
    <name type="common">Pig</name>
    <dbReference type="NCBI Taxonomy" id="9823"/>
</organismHost>
<evidence type="ECO:0000250" key="1">
    <source>
        <dbReference type="UniProtKB" id="P03521"/>
    </source>
</evidence>
<evidence type="ECO:0000305" key="2"/>
<protein>
    <recommendedName>
        <fullName>Nucleoprotein</fullName>
        <shortName>NP</shortName>
    </recommendedName>
    <alternativeName>
        <fullName>Nucleocapsid protein</fullName>
        <shortName>Protein N</shortName>
    </alternativeName>
</protein>
<accession>Q8B0H9</accession>
<reference key="1">
    <citation type="journal article" date="2002" name="J. Gen. Virol.">
        <title>Full-length genome analysis of natural isolates of vesicular stomatitis virus (Indiana 1 serotype) from North, Central and South America.</title>
        <authorList>
            <person name="Rodriguez L.L."/>
            <person name="Pauszek S.J."/>
            <person name="Bunch T.A."/>
            <person name="Schumann K.R."/>
        </authorList>
    </citation>
    <scope>NUCLEOTIDE SEQUENCE [GENOMIC RNA]</scope>
</reference>
<gene>
    <name type="primary">N</name>
</gene>
<organism>
    <name type="scientific">Vesicular stomatitis Indiana virus (strain 85CLB South America)</name>
    <name type="common">VSIV</name>
    <dbReference type="NCBI Taxonomy" id="434490"/>
    <lineage>
        <taxon>Viruses</taxon>
        <taxon>Riboviria</taxon>
        <taxon>Orthornavirae</taxon>
        <taxon>Negarnaviricota</taxon>
        <taxon>Haploviricotina</taxon>
        <taxon>Monjiviricetes</taxon>
        <taxon>Mononegavirales</taxon>
        <taxon>Rhabdoviridae</taxon>
        <taxon>Alpharhabdovirinae</taxon>
        <taxon>Vesiculovirus</taxon>
        <taxon>Vesiculovirus indiana</taxon>
    </lineage>
</organism>
<feature type="chain" id="PRO_0000287268" description="Nucleoprotein">
    <location>
        <begin position="1"/>
        <end position="422"/>
    </location>
</feature>
<feature type="region of interest" description="Interaction with the phosphoprotein" evidence="1">
    <location>
        <begin position="350"/>
        <end position="390"/>
    </location>
</feature>
<feature type="binding site" evidence="1">
    <location>
        <position position="143"/>
    </location>
    <ligand>
        <name>RNA</name>
        <dbReference type="ChEBI" id="CHEBI:33697"/>
    </ligand>
</feature>
<feature type="binding site" evidence="1">
    <location>
        <position position="152"/>
    </location>
    <ligand>
        <name>RNA</name>
        <dbReference type="ChEBI" id="CHEBI:33697"/>
    </ligand>
</feature>
<feature type="binding site" evidence="1">
    <location>
        <position position="206"/>
    </location>
    <ligand>
        <name>RNA</name>
        <dbReference type="ChEBI" id="CHEBI:33697"/>
    </ligand>
</feature>
<feature type="binding site" evidence="1">
    <location>
        <position position="214"/>
    </location>
    <ligand>
        <name>RNA</name>
        <dbReference type="ChEBI" id="CHEBI:33697"/>
    </ligand>
</feature>
<feature type="binding site" evidence="1">
    <location>
        <position position="286"/>
    </location>
    <ligand>
        <name>RNA</name>
        <dbReference type="ChEBI" id="CHEBI:33697"/>
    </ligand>
</feature>
<feature type="binding site" evidence="1">
    <location>
        <position position="317"/>
    </location>
    <ligand>
        <name>RNA</name>
        <dbReference type="ChEBI" id="CHEBI:33697"/>
    </ligand>
</feature>
<feature type="binding site" evidence="1">
    <location>
        <position position="408"/>
    </location>
    <ligand>
        <name>RNA</name>
        <dbReference type="ChEBI" id="CHEBI:33697"/>
    </ligand>
</feature>
<proteinExistence type="inferred from homology"/>
<sequence length="422" mass="47368">MSVTVKRIIDSTVIVPKLPANEDPVEYPADYFRKSKEIPLYINTTKSLSDLRGYVYQGLKSGNVSIIHVNSYLYGALKDIRGKLDKDWSSFGINIGKAGDTIGIFDLVSVKALDGVLPDGVSDASRTSADDKWLPLYLLGLYRVGRTQMPEYRKKLMDGLTNQCKMINEQFEPLVPEGRDIFDVWGNDSNYTKIVAAVDMFFHMFKKHECASFRYGTIVSRFKDCAALATFGHLCKITGMSTEDVTTWILNREVADEMVQMMLPGQEIDKADSYMPYLIDFGLSSKSPYSSVKNPAFHFWGQLTALLLRSTRARNARQPDDIEYTSLTTAGLLYAYAVGSSADLAQQFCVGDNKYTPDDSTGGLTTNAPPQGRDVVEWLGWFEDQNRKPTPDMMQYAKRAVMSLQGLREKTIGKYAKSEFDK</sequence>
<keyword id="KW-0167">Capsid protein</keyword>
<keyword id="KW-1139">Helical capsid protein</keyword>
<keyword id="KW-1035">Host cytoplasm</keyword>
<keyword id="KW-0687">Ribonucleoprotein</keyword>
<keyword id="KW-0694">RNA-binding</keyword>
<keyword id="KW-0543">Viral nucleoprotein</keyword>
<keyword id="KW-0946">Virion</keyword>
<dbReference type="EMBL" id="AF473865">
    <property type="protein sequence ID" value="AAN16985.1"/>
    <property type="molecule type" value="Genomic_RNA"/>
</dbReference>
<dbReference type="SMR" id="Q8B0H9"/>
<dbReference type="Proteomes" id="UP000007625">
    <property type="component" value="Genome"/>
</dbReference>
<dbReference type="GO" id="GO:0019029">
    <property type="term" value="C:helical viral capsid"/>
    <property type="evidence" value="ECO:0007669"/>
    <property type="project" value="UniProtKB-KW"/>
</dbReference>
<dbReference type="GO" id="GO:0030430">
    <property type="term" value="C:host cell cytoplasm"/>
    <property type="evidence" value="ECO:0007669"/>
    <property type="project" value="UniProtKB-SubCell"/>
</dbReference>
<dbReference type="GO" id="GO:1990904">
    <property type="term" value="C:ribonucleoprotein complex"/>
    <property type="evidence" value="ECO:0007669"/>
    <property type="project" value="UniProtKB-KW"/>
</dbReference>
<dbReference type="GO" id="GO:0019013">
    <property type="term" value="C:viral nucleocapsid"/>
    <property type="evidence" value="ECO:0007669"/>
    <property type="project" value="UniProtKB-KW"/>
</dbReference>
<dbReference type="GO" id="GO:0003723">
    <property type="term" value="F:RNA binding"/>
    <property type="evidence" value="ECO:0007669"/>
    <property type="project" value="UniProtKB-KW"/>
</dbReference>
<dbReference type="FunFam" id="1.10.3610.10:FF:000001">
    <property type="entry name" value="Nucleoprotein"/>
    <property type="match status" value="1"/>
</dbReference>
<dbReference type="Gene3D" id="1.10.3610.10">
    <property type="entry name" value="Nucleoprotein"/>
    <property type="match status" value="1"/>
</dbReference>
<dbReference type="Gene3D" id="1.10.3570.10">
    <property type="entry name" value="Rhabdovirus nucleocapsid protein like domain"/>
    <property type="match status" value="1"/>
</dbReference>
<dbReference type="InterPro" id="IPR000448">
    <property type="entry name" value="Rhabdo_ncapsid"/>
</dbReference>
<dbReference type="InterPro" id="IPR023331">
    <property type="entry name" value="Rhabdovirus_ncapsid_C"/>
</dbReference>
<dbReference type="InterPro" id="IPR023330">
    <property type="entry name" value="Rhabdovirus_ncapsid_N"/>
</dbReference>
<dbReference type="InterPro" id="IPR035961">
    <property type="entry name" value="Rhabdovirus_nucleoprotein-like"/>
</dbReference>
<dbReference type="Pfam" id="PF00945">
    <property type="entry name" value="Rhabdo_ncap"/>
    <property type="match status" value="1"/>
</dbReference>
<dbReference type="SUPFAM" id="SSF140809">
    <property type="entry name" value="Rhabdovirus nucleoprotein-like"/>
    <property type="match status" value="1"/>
</dbReference>
<name>NCAP_VSIVS</name>
<comment type="function">
    <text evidence="1">Encapsidates the genome in a ratio of one N per nine ribonucleotides, protecting it from nucleases. The encapsidated genomic RNA is termed the NC and serves as template for transcription and replication. The nucleocapsid is bullet-shaped with the tip containing 8 turns of a conical spiral before reaching the helical cylindrical trunk. Nucleocapsid assembly is concomitant with replication, therefore viral replication depends on the intracellular concentration of free N, termed N(0). All replicative products are resistant to nucleases.</text>
</comment>
<comment type="subunit">
    <text evidence="1">Homomultimerizes to form the nucleocapsid. Binds to viral genomic RNA; this interaction contributes to the virion assembly. N in the nucleocapsid interacts (via C-terminus) with the P protein (via C-terminus); this interaction allows to package the L polymerase in the virion and positions the polymerase on the template, since P acts as a bridge between N and L. N(0) interacts with the P protein; this interaction prevents the uncontrolled aggregation of N(0). Interacts with the matrix protein (inner layer); this interaction contributes to the virion assembly. Interacts with the L polymerase.</text>
</comment>
<comment type="subcellular location">
    <subcellularLocation>
        <location evidence="1">Virion</location>
    </subcellularLocation>
    <subcellularLocation>
        <location evidence="1">Host cytoplasm</location>
    </subcellularLocation>
    <text evidence="1">The nucleocapsid is synthesized in the cytoplasm, and is subsequently transported via microtubules to the cell periphery. About 1240 copies of N are present in the virion.</text>
</comment>
<comment type="similarity">
    <text evidence="2">Belongs to the vesiculovirus nucleocapsid protein family.</text>
</comment>